<accession>A8H733</accession>
<keyword id="KW-0963">Cytoplasm</keyword>
<keyword id="KW-0342">GTP-binding</keyword>
<keyword id="KW-0547">Nucleotide-binding</keyword>
<keyword id="KW-0648">Protein biosynthesis</keyword>
<keyword id="KW-1185">Reference proteome</keyword>
<feature type="chain" id="PRO_1000075169" description="Peptide chain release factor 3">
    <location>
        <begin position="1"/>
        <end position="526"/>
    </location>
</feature>
<feature type="domain" description="tr-type G">
    <location>
        <begin position="9"/>
        <end position="277"/>
    </location>
</feature>
<feature type="binding site" evidence="1">
    <location>
        <begin position="18"/>
        <end position="25"/>
    </location>
    <ligand>
        <name>GTP</name>
        <dbReference type="ChEBI" id="CHEBI:37565"/>
    </ligand>
</feature>
<feature type="binding site" evidence="1">
    <location>
        <begin position="86"/>
        <end position="90"/>
    </location>
    <ligand>
        <name>GTP</name>
        <dbReference type="ChEBI" id="CHEBI:37565"/>
    </ligand>
</feature>
<feature type="binding site" evidence="1">
    <location>
        <begin position="140"/>
        <end position="143"/>
    </location>
    <ligand>
        <name>GTP</name>
        <dbReference type="ChEBI" id="CHEBI:37565"/>
    </ligand>
</feature>
<gene>
    <name evidence="1" type="primary">prfC</name>
    <name type="ordered locus">Spea_3053</name>
</gene>
<dbReference type="EMBL" id="CP000851">
    <property type="protein sequence ID" value="ABV88370.1"/>
    <property type="molecule type" value="Genomic_DNA"/>
</dbReference>
<dbReference type="RefSeq" id="WP_012156274.1">
    <property type="nucleotide sequence ID" value="NC_009901.1"/>
</dbReference>
<dbReference type="SMR" id="A8H733"/>
<dbReference type="STRING" id="398579.Spea_3053"/>
<dbReference type="KEGG" id="spl:Spea_3053"/>
<dbReference type="eggNOG" id="COG4108">
    <property type="taxonomic scope" value="Bacteria"/>
</dbReference>
<dbReference type="HOGENOM" id="CLU_002794_2_1_6"/>
<dbReference type="OrthoDB" id="9804431at2"/>
<dbReference type="Proteomes" id="UP000002608">
    <property type="component" value="Chromosome"/>
</dbReference>
<dbReference type="GO" id="GO:0005829">
    <property type="term" value="C:cytosol"/>
    <property type="evidence" value="ECO:0007669"/>
    <property type="project" value="TreeGrafter"/>
</dbReference>
<dbReference type="GO" id="GO:0005525">
    <property type="term" value="F:GTP binding"/>
    <property type="evidence" value="ECO:0007669"/>
    <property type="project" value="UniProtKB-UniRule"/>
</dbReference>
<dbReference type="GO" id="GO:0003924">
    <property type="term" value="F:GTPase activity"/>
    <property type="evidence" value="ECO:0007669"/>
    <property type="project" value="InterPro"/>
</dbReference>
<dbReference type="GO" id="GO:0097216">
    <property type="term" value="F:guanosine tetraphosphate binding"/>
    <property type="evidence" value="ECO:0007669"/>
    <property type="project" value="UniProtKB-ARBA"/>
</dbReference>
<dbReference type="GO" id="GO:0016150">
    <property type="term" value="F:translation release factor activity, codon nonspecific"/>
    <property type="evidence" value="ECO:0007669"/>
    <property type="project" value="TreeGrafter"/>
</dbReference>
<dbReference type="GO" id="GO:0016149">
    <property type="term" value="F:translation release factor activity, codon specific"/>
    <property type="evidence" value="ECO:0007669"/>
    <property type="project" value="UniProtKB-UniRule"/>
</dbReference>
<dbReference type="GO" id="GO:0006449">
    <property type="term" value="P:regulation of translational termination"/>
    <property type="evidence" value="ECO:0007669"/>
    <property type="project" value="UniProtKB-UniRule"/>
</dbReference>
<dbReference type="CDD" id="cd04169">
    <property type="entry name" value="RF3"/>
    <property type="match status" value="1"/>
</dbReference>
<dbReference type="CDD" id="cd03689">
    <property type="entry name" value="RF3_II"/>
    <property type="match status" value="1"/>
</dbReference>
<dbReference type="CDD" id="cd16259">
    <property type="entry name" value="RF3_III"/>
    <property type="match status" value="1"/>
</dbReference>
<dbReference type="FunFam" id="2.40.30.10:FF:000040">
    <property type="entry name" value="Peptide chain release factor 3"/>
    <property type="match status" value="1"/>
</dbReference>
<dbReference type="FunFam" id="3.30.70.3280:FF:000001">
    <property type="entry name" value="Peptide chain release factor 3"/>
    <property type="match status" value="1"/>
</dbReference>
<dbReference type="FunFam" id="3.40.50.300:FF:000542">
    <property type="entry name" value="Peptide chain release factor 3"/>
    <property type="match status" value="1"/>
</dbReference>
<dbReference type="Gene3D" id="3.40.50.300">
    <property type="entry name" value="P-loop containing nucleotide triphosphate hydrolases"/>
    <property type="match status" value="2"/>
</dbReference>
<dbReference type="Gene3D" id="3.30.70.3280">
    <property type="entry name" value="Peptide chain release factor 3, domain III"/>
    <property type="match status" value="1"/>
</dbReference>
<dbReference type="HAMAP" id="MF_00072">
    <property type="entry name" value="Rel_fac_3"/>
    <property type="match status" value="1"/>
</dbReference>
<dbReference type="InterPro" id="IPR053905">
    <property type="entry name" value="EF-G-like_DII"/>
</dbReference>
<dbReference type="InterPro" id="IPR035647">
    <property type="entry name" value="EFG_III/V"/>
</dbReference>
<dbReference type="InterPro" id="IPR031157">
    <property type="entry name" value="G_TR_CS"/>
</dbReference>
<dbReference type="InterPro" id="IPR027417">
    <property type="entry name" value="P-loop_NTPase"/>
</dbReference>
<dbReference type="InterPro" id="IPR004548">
    <property type="entry name" value="PrfC"/>
</dbReference>
<dbReference type="InterPro" id="IPR032090">
    <property type="entry name" value="RF3_C"/>
</dbReference>
<dbReference type="InterPro" id="IPR038467">
    <property type="entry name" value="RF3_dom_3_sf"/>
</dbReference>
<dbReference type="InterPro" id="IPR041732">
    <property type="entry name" value="RF3_GTP-bd"/>
</dbReference>
<dbReference type="InterPro" id="IPR005225">
    <property type="entry name" value="Small_GTP-bd"/>
</dbReference>
<dbReference type="InterPro" id="IPR000795">
    <property type="entry name" value="T_Tr_GTP-bd_dom"/>
</dbReference>
<dbReference type="InterPro" id="IPR009000">
    <property type="entry name" value="Transl_B-barrel_sf"/>
</dbReference>
<dbReference type="NCBIfam" id="TIGR00503">
    <property type="entry name" value="prfC"/>
    <property type="match status" value="1"/>
</dbReference>
<dbReference type="NCBIfam" id="NF001964">
    <property type="entry name" value="PRK00741.1"/>
    <property type="match status" value="1"/>
</dbReference>
<dbReference type="NCBIfam" id="TIGR00231">
    <property type="entry name" value="small_GTP"/>
    <property type="match status" value="1"/>
</dbReference>
<dbReference type="PANTHER" id="PTHR43556">
    <property type="entry name" value="PEPTIDE CHAIN RELEASE FACTOR RF3"/>
    <property type="match status" value="1"/>
</dbReference>
<dbReference type="PANTHER" id="PTHR43556:SF2">
    <property type="entry name" value="PEPTIDE CHAIN RELEASE FACTOR RF3"/>
    <property type="match status" value="1"/>
</dbReference>
<dbReference type="Pfam" id="PF22042">
    <property type="entry name" value="EF-G_D2"/>
    <property type="match status" value="1"/>
</dbReference>
<dbReference type="Pfam" id="PF00009">
    <property type="entry name" value="GTP_EFTU"/>
    <property type="match status" value="1"/>
</dbReference>
<dbReference type="Pfam" id="PF16658">
    <property type="entry name" value="RF3_C"/>
    <property type="match status" value="1"/>
</dbReference>
<dbReference type="PRINTS" id="PR00315">
    <property type="entry name" value="ELONGATNFCT"/>
</dbReference>
<dbReference type="SUPFAM" id="SSF54980">
    <property type="entry name" value="EF-G C-terminal domain-like"/>
    <property type="match status" value="1"/>
</dbReference>
<dbReference type="SUPFAM" id="SSF52540">
    <property type="entry name" value="P-loop containing nucleoside triphosphate hydrolases"/>
    <property type="match status" value="1"/>
</dbReference>
<dbReference type="SUPFAM" id="SSF50447">
    <property type="entry name" value="Translation proteins"/>
    <property type="match status" value="1"/>
</dbReference>
<dbReference type="PROSITE" id="PS00301">
    <property type="entry name" value="G_TR_1"/>
    <property type="match status" value="1"/>
</dbReference>
<dbReference type="PROSITE" id="PS51722">
    <property type="entry name" value="G_TR_2"/>
    <property type="match status" value="1"/>
</dbReference>
<reference key="1">
    <citation type="submission" date="2007-10" db="EMBL/GenBank/DDBJ databases">
        <title>Complete sequence of Shewanella pealeana ATCC 700345.</title>
        <authorList>
            <consortium name="US DOE Joint Genome Institute"/>
            <person name="Copeland A."/>
            <person name="Lucas S."/>
            <person name="Lapidus A."/>
            <person name="Barry K."/>
            <person name="Glavina del Rio T."/>
            <person name="Dalin E."/>
            <person name="Tice H."/>
            <person name="Pitluck S."/>
            <person name="Chertkov O."/>
            <person name="Brettin T."/>
            <person name="Bruce D."/>
            <person name="Detter J.C."/>
            <person name="Han C."/>
            <person name="Schmutz J."/>
            <person name="Larimer F."/>
            <person name="Land M."/>
            <person name="Hauser L."/>
            <person name="Kyrpides N."/>
            <person name="Kim E."/>
            <person name="Zhao J.-S.Z."/>
            <person name="Manno D."/>
            <person name="Hawari J."/>
            <person name="Richardson P."/>
        </authorList>
    </citation>
    <scope>NUCLEOTIDE SEQUENCE [LARGE SCALE GENOMIC DNA]</scope>
    <source>
        <strain>ATCC 700345 / ANG-SQ1</strain>
    </source>
</reference>
<name>RF3_SHEPA</name>
<proteinExistence type="inferred from homology"/>
<evidence type="ECO:0000255" key="1">
    <source>
        <dbReference type="HAMAP-Rule" id="MF_00072"/>
    </source>
</evidence>
<sequence length="526" mass="59352">MSGYKVEVDKRRTFAIISHPDAGKTTITEKVLLFGNALQKAGTVKGKKSGQHAKSDWMEMEKDRGISITTSVMQFPYSDALVNLLDTPGHEDFSEDTYRTLTAVDSCLMVIDSAKGVEQRTIKLMEVTRLRDTPIVTFMNKLDRDIRDPIELMDEVEEVLNIKCAPITWPIGAGKEFKGVYHLLRDEVILYQGGMGHTIQDSRVIKGLDNPELDEAIGSYAAEIRDEMELVVGASHEFDHQQFLKGELTPVYFGTALGNFGVDHILDGIVEWAPVPQPRETEIREVQPEEEKFSGFVFKIQANMDPKHRDRVAFMRICSGRYEQGMKMHHVRLGKDVNVSDALTFMAGDRNRAEAAYPGDIIGLHNHGTIRIGDTFTQGEKLRFTGVPNFAPEMFRRIRLKDPLKQKQLLKGLVQLSEEGAVQVFRPLDSNDLIVGAVGVLQFEVVVGRLKTEYKVEAIYEAISVATARWVYCDDHKKLDEFKRKCSMNLALDGGDNLTYIAPTMVNLNLSMERYPDIEFAKTREN</sequence>
<protein>
    <recommendedName>
        <fullName evidence="1">Peptide chain release factor 3</fullName>
        <shortName evidence="1">RF-3</shortName>
    </recommendedName>
</protein>
<organism>
    <name type="scientific">Shewanella pealeana (strain ATCC 700345 / ANG-SQ1)</name>
    <dbReference type="NCBI Taxonomy" id="398579"/>
    <lineage>
        <taxon>Bacteria</taxon>
        <taxon>Pseudomonadati</taxon>
        <taxon>Pseudomonadota</taxon>
        <taxon>Gammaproteobacteria</taxon>
        <taxon>Alteromonadales</taxon>
        <taxon>Shewanellaceae</taxon>
        <taxon>Shewanella</taxon>
    </lineage>
</organism>
<comment type="function">
    <text evidence="1">Increases the formation of ribosomal termination complexes and stimulates activities of RF-1 and RF-2. It binds guanine nucleotides and has strong preference for UGA stop codons. It may interact directly with the ribosome. The stimulation of RF-1 and RF-2 is significantly reduced by GTP and GDP, but not by GMP.</text>
</comment>
<comment type="subcellular location">
    <subcellularLocation>
        <location evidence="1">Cytoplasm</location>
    </subcellularLocation>
</comment>
<comment type="similarity">
    <text evidence="1">Belongs to the TRAFAC class translation factor GTPase superfamily. Classic translation factor GTPase family. PrfC subfamily.</text>
</comment>